<sequence length="523" mass="60645">MCVPSRVIICLLRNDLRLHDNEVLHWAHRNADQIVPLYCFDPRHYVGTHYFNFPKTGPHRLKFLLESVRDLRITLKKKGSNLLLRRGKPEEVIEDLVKQLGNVSAVTLHEEATKEETDVESAVKQACTRLGIKYQTFWGSTLYHREDLPFRHISSLPDVYTQFRKAVETQGKVRPTFQMPDKLKPLPSGLEEGSVPSHEDFDQQDPLTDPRTAFPCSGGESQALQRLEHYFWETNLVASYKDTRNGLIGLDYSTKFAPWLALGCVSPRYIYEQIGKYEKERTANQSTYWVIFELLWRDYFRFVALKYGRRIFFLRGLQDKDIPWKRDPKLFDAWKEGRTGVPFVDANMRELAMTGFMSNRGRQNVASFLTKDLGIDWRMGAEWFEYLLVDYDVCSNYGNWLYSAGIGNDPRENRKFNMIKQGLDYDSGGDYIRLWVPELQQIKGGDAHTPWALSNASLAHANLSLGETYPYPIVMAPEWSRHINQKPAGSWEKSARRGKGPSHTPKQHKNRGIDFYFSRNKDV</sequence>
<organism>
    <name type="scientific">Xenopus laevis</name>
    <name type="common">African clawed frog</name>
    <dbReference type="NCBI Taxonomy" id="8355"/>
    <lineage>
        <taxon>Eukaryota</taxon>
        <taxon>Metazoa</taxon>
        <taxon>Chordata</taxon>
        <taxon>Craniata</taxon>
        <taxon>Vertebrata</taxon>
        <taxon>Euteleostomi</taxon>
        <taxon>Amphibia</taxon>
        <taxon>Batrachia</taxon>
        <taxon>Anura</taxon>
        <taxon>Pipoidea</taxon>
        <taxon>Pipidae</taxon>
        <taxon>Xenopodinae</taxon>
        <taxon>Xenopus</taxon>
        <taxon>Xenopus</taxon>
    </lineage>
</organism>
<name>CRYD_XENLA</name>
<reference key="1">
    <citation type="journal article" date="2004" name="Genes Cells">
        <title>Identification of cryptochrome DASH from vertebrates.</title>
        <authorList>
            <person name="Daiyasu H."/>
            <person name="Ishikawa T."/>
            <person name="Kuma K."/>
            <person name="Iwai S."/>
            <person name="Todo T."/>
            <person name="Toh H."/>
        </authorList>
    </citation>
    <scope>NUCLEOTIDE SEQUENCE [MRNA]</scope>
    <scope>FUNCTION</scope>
</reference>
<evidence type="ECO:0000250" key="1"/>
<evidence type="ECO:0000256" key="2">
    <source>
        <dbReference type="SAM" id="MobiDB-lite"/>
    </source>
</evidence>
<evidence type="ECO:0000269" key="3">
    <source>
    </source>
</evidence>
<evidence type="ECO:0000305" key="4"/>
<feature type="chain" id="PRO_0000235317" description="Cryptochrome DASH">
    <location>
        <begin position="1"/>
        <end position="523"/>
    </location>
</feature>
<feature type="domain" description="Photolyase/cryptochrome alpha/beta">
    <location>
        <begin position="6"/>
        <end position="142"/>
    </location>
</feature>
<feature type="region of interest" description="Disordered" evidence="2">
    <location>
        <begin position="174"/>
        <end position="211"/>
    </location>
</feature>
<feature type="region of interest" description="Disordered" evidence="2">
    <location>
        <begin position="486"/>
        <end position="523"/>
    </location>
</feature>
<feature type="compositionally biased region" description="Basic residues" evidence="2">
    <location>
        <begin position="496"/>
        <end position="510"/>
    </location>
</feature>
<dbReference type="EMBL" id="AB120760">
    <property type="protein sequence ID" value="BAD08601.1"/>
    <property type="molecule type" value="mRNA"/>
</dbReference>
<dbReference type="RefSeq" id="NP_001084438.1">
    <property type="nucleotide sequence ID" value="NM_001090969.1"/>
</dbReference>
<dbReference type="SMR" id="Q75WS4"/>
<dbReference type="GeneID" id="403387"/>
<dbReference type="KEGG" id="xla:403387"/>
<dbReference type="AGR" id="Xenbase:XB-GENE-5887331"/>
<dbReference type="CTD" id="403387"/>
<dbReference type="Xenbase" id="XB-GENE-5887331">
    <property type="gene designation" value="cry-dash.L"/>
</dbReference>
<dbReference type="OrthoDB" id="435881at2759"/>
<dbReference type="Proteomes" id="UP000186698">
    <property type="component" value="Chromosome 6L"/>
</dbReference>
<dbReference type="Bgee" id="403387">
    <property type="expression patterns" value="Expressed in ovary and 19 other cell types or tissues"/>
</dbReference>
<dbReference type="GO" id="GO:0003684">
    <property type="term" value="F:damaged DNA binding"/>
    <property type="evidence" value="ECO:0000318"/>
    <property type="project" value="GO_Central"/>
</dbReference>
<dbReference type="GO" id="GO:0003904">
    <property type="term" value="F:deoxyribodipyrimidine photo-lyase activity"/>
    <property type="evidence" value="ECO:0000318"/>
    <property type="project" value="GO_Central"/>
</dbReference>
<dbReference type="GO" id="GO:0071949">
    <property type="term" value="F:FAD binding"/>
    <property type="evidence" value="ECO:0000318"/>
    <property type="project" value="GO_Central"/>
</dbReference>
<dbReference type="GO" id="GO:0000719">
    <property type="term" value="P:photoreactive repair"/>
    <property type="evidence" value="ECO:0000318"/>
    <property type="project" value="GO_Central"/>
</dbReference>
<dbReference type="Gene3D" id="1.25.40.80">
    <property type="match status" value="1"/>
</dbReference>
<dbReference type="Gene3D" id="1.10.579.10">
    <property type="entry name" value="DNA Cyclobutane Dipyrimidine Photolyase, subunit A, domain 3"/>
    <property type="match status" value="1"/>
</dbReference>
<dbReference type="Gene3D" id="3.40.50.620">
    <property type="entry name" value="HUPs"/>
    <property type="match status" value="1"/>
</dbReference>
<dbReference type="InterPro" id="IPR014133">
    <property type="entry name" value="Cry_DASH"/>
</dbReference>
<dbReference type="InterPro" id="IPR036134">
    <property type="entry name" value="Crypto/Photolyase_FAD-like_sf"/>
</dbReference>
<dbReference type="InterPro" id="IPR036155">
    <property type="entry name" value="Crypto/Photolyase_N_sf"/>
</dbReference>
<dbReference type="InterPro" id="IPR005101">
    <property type="entry name" value="Cryptochr/Photolyase_FAD-bd"/>
</dbReference>
<dbReference type="InterPro" id="IPR002081">
    <property type="entry name" value="Cryptochrome/DNA_photolyase_1"/>
</dbReference>
<dbReference type="InterPro" id="IPR006050">
    <property type="entry name" value="DNA_photolyase_N"/>
</dbReference>
<dbReference type="InterPro" id="IPR014729">
    <property type="entry name" value="Rossmann-like_a/b/a_fold"/>
</dbReference>
<dbReference type="NCBIfam" id="TIGR02765">
    <property type="entry name" value="crypto_DASH"/>
    <property type="match status" value="1"/>
</dbReference>
<dbReference type="PANTHER" id="PTHR11455">
    <property type="entry name" value="CRYPTOCHROME"/>
    <property type="match status" value="1"/>
</dbReference>
<dbReference type="PANTHER" id="PTHR11455:SF22">
    <property type="entry name" value="CRYPTOCHROME DASH"/>
    <property type="match status" value="1"/>
</dbReference>
<dbReference type="Pfam" id="PF00875">
    <property type="entry name" value="DNA_photolyase"/>
    <property type="match status" value="1"/>
</dbReference>
<dbReference type="Pfam" id="PF03441">
    <property type="entry name" value="FAD_binding_7"/>
    <property type="match status" value="1"/>
</dbReference>
<dbReference type="PRINTS" id="PR00147">
    <property type="entry name" value="DNAPHOTLYASE"/>
</dbReference>
<dbReference type="SUPFAM" id="SSF48173">
    <property type="entry name" value="Cryptochrome/photolyase FAD-binding domain"/>
    <property type="match status" value="1"/>
</dbReference>
<dbReference type="SUPFAM" id="SSF52425">
    <property type="entry name" value="Cryptochrome/photolyase, N-terminal domain"/>
    <property type="match status" value="1"/>
</dbReference>
<dbReference type="PROSITE" id="PS51645">
    <property type="entry name" value="PHR_CRY_ALPHA_BETA"/>
    <property type="match status" value="1"/>
</dbReference>
<protein>
    <recommendedName>
        <fullName>Cryptochrome DASH</fullName>
    </recommendedName>
</protein>
<proteinExistence type="evidence at transcript level"/>
<accession>Q75WS4</accession>
<comment type="function">
    <text evidence="1 3">May have a photoreceptor function (By similarity). Has weak cyclobutyl pyrimidine photolyase activity when expressed in E.coli and when tested in vitro.</text>
</comment>
<comment type="cofactor">
    <cofactor evidence="1">
        <name>FAD</name>
        <dbReference type="ChEBI" id="CHEBI:57692"/>
    </cofactor>
    <text evidence="1">Binds 1 FAD per subunit.</text>
</comment>
<comment type="cofactor">
    <cofactor evidence="1">
        <name>(6R)-5,10-methylene-5,6,7,8-tetrahydrofolate</name>
        <dbReference type="ChEBI" id="CHEBI:15636"/>
    </cofactor>
    <text evidence="1">Binds 1 5,10-methenyltetrahydrofolate (MTHF) per subunit.</text>
</comment>
<comment type="similarity">
    <text evidence="4">Belongs to the DNA photolyase class-1 family.</text>
</comment>
<gene>
    <name type="primary">cry-dash</name>
</gene>
<keyword id="KW-0157">Chromophore</keyword>
<keyword id="KW-0274">FAD</keyword>
<keyword id="KW-0285">Flavoprotein</keyword>
<keyword id="KW-1185">Reference proteome</keyword>